<gene>
    <name evidence="2" type="primary">dcd</name>
    <name type="ordered locus">Rv0321</name>
    <name type="ORF">MTCY63.26</name>
</gene>
<comment type="function">
    <text evidence="4">Bifunctional enzyme that catalyzes both the deamination of dCTP to dUTP and the hydrolysis of dUTP to dUMP without releasing the toxic dUTP intermediate. It also acts as a dUTP diphosphatase. Affinity for dCTP and dUTP are very similar.</text>
</comment>
<comment type="catalytic activity">
    <reaction evidence="2 4">
        <text>dCTP + 2 H2O = dUMP + NH4(+) + diphosphate</text>
        <dbReference type="Rhea" id="RHEA:19205"/>
        <dbReference type="ChEBI" id="CHEBI:15377"/>
        <dbReference type="ChEBI" id="CHEBI:28938"/>
        <dbReference type="ChEBI" id="CHEBI:33019"/>
        <dbReference type="ChEBI" id="CHEBI:61481"/>
        <dbReference type="ChEBI" id="CHEBI:246422"/>
        <dbReference type="EC" id="3.5.4.30"/>
    </reaction>
</comment>
<comment type="activity regulation">
    <text evidence="4">dTTP inhibits both the combined reaction and the dUTPase reaction.</text>
</comment>
<comment type="biophysicochemical properties">
    <kinetics>
        <text evidence="4">kcat is 0.18 sec(-1) with dCTP as substrate. kcat is 0.33 sec(-1) with dUTP as substrate.</text>
    </kinetics>
</comment>
<comment type="pathway">
    <text evidence="2 6">Pyrimidine metabolism; dUMP biosynthesis; dUMP from dCTP: step 1/1.</text>
</comment>
<comment type="subunit">
    <text evidence="2 4">Homotrimer.</text>
</comment>
<comment type="similarity">
    <text evidence="2">Belongs to the dCTP deaminase family.</text>
</comment>
<organism>
    <name type="scientific">Mycobacterium tuberculosis (strain ATCC 25618 / H37Rv)</name>
    <dbReference type="NCBI Taxonomy" id="83332"/>
    <lineage>
        <taxon>Bacteria</taxon>
        <taxon>Bacillati</taxon>
        <taxon>Actinomycetota</taxon>
        <taxon>Actinomycetes</taxon>
        <taxon>Mycobacteriales</taxon>
        <taxon>Mycobacteriaceae</taxon>
        <taxon>Mycobacterium</taxon>
        <taxon>Mycobacterium tuberculosis complex</taxon>
    </lineage>
</organism>
<name>DCDB_MYCTU</name>
<evidence type="ECO:0000250" key="1">
    <source>
        <dbReference type="UniProtKB" id="P28248"/>
    </source>
</evidence>
<evidence type="ECO:0000255" key="2">
    <source>
        <dbReference type="HAMAP-Rule" id="MF_00146"/>
    </source>
</evidence>
<evidence type="ECO:0000256" key="3">
    <source>
        <dbReference type="SAM" id="MobiDB-lite"/>
    </source>
</evidence>
<evidence type="ECO:0000269" key="4">
    <source>
    </source>
</evidence>
<evidence type="ECO:0000303" key="5">
    <source>
    </source>
</evidence>
<evidence type="ECO:0000305" key="6"/>
<evidence type="ECO:0000305" key="7">
    <source>
    </source>
</evidence>
<evidence type="ECO:0000305" key="8">
    <source ref="4"/>
</evidence>
<evidence type="ECO:0007744" key="9">
    <source>
        <dbReference type="PDB" id="2QLP"/>
    </source>
</evidence>
<evidence type="ECO:0007744" key="10">
    <source>
        <dbReference type="PDB" id="2QXX"/>
    </source>
</evidence>
<evidence type="ECO:0007744" key="11">
    <source>
        <dbReference type="PDB" id="4A6A"/>
    </source>
</evidence>
<evidence type="ECO:0007829" key="12">
    <source>
        <dbReference type="PDB" id="2QXX"/>
    </source>
</evidence>
<evidence type="ECO:0007829" key="13">
    <source>
        <dbReference type="PDB" id="4A6A"/>
    </source>
</evidence>
<dbReference type="EC" id="3.5.4.30" evidence="2 4"/>
<dbReference type="EMBL" id="AL123456">
    <property type="protein sequence ID" value="CCP43051.1"/>
    <property type="molecule type" value="Genomic_DNA"/>
</dbReference>
<dbReference type="PIR" id="B70526">
    <property type="entry name" value="B70526"/>
</dbReference>
<dbReference type="RefSeq" id="NP_214835.1">
    <property type="nucleotide sequence ID" value="NC_000962.3"/>
</dbReference>
<dbReference type="RefSeq" id="WP_003898399.1">
    <property type="nucleotide sequence ID" value="NZ_NVQJ01000026.1"/>
</dbReference>
<dbReference type="PDB" id="2QLP">
    <property type="method" value="X-ray"/>
    <property type="resolution" value="2.47 A"/>
    <property type="chains" value="A/B/C/D/E/F=1-161"/>
</dbReference>
<dbReference type="PDB" id="2QXX">
    <property type="method" value="X-ray"/>
    <property type="resolution" value="2.00 A"/>
    <property type="chains" value="A/B=1-190"/>
</dbReference>
<dbReference type="PDB" id="4A6A">
    <property type="method" value="X-ray"/>
    <property type="resolution" value="2.90 A"/>
    <property type="chains" value="A/B/C/D/E/F/G/H/I/J/K/L=1-190"/>
</dbReference>
<dbReference type="PDBsum" id="2QLP"/>
<dbReference type="PDBsum" id="2QXX"/>
<dbReference type="PDBsum" id="4A6A"/>
<dbReference type="SMR" id="P9WP17"/>
<dbReference type="FunCoup" id="P9WP17">
    <property type="interactions" value="38"/>
</dbReference>
<dbReference type="IntAct" id="P9WP17">
    <property type="interactions" value="5"/>
</dbReference>
<dbReference type="MINT" id="P9WP17"/>
<dbReference type="STRING" id="83332.Rv0321"/>
<dbReference type="PaxDb" id="83332-Rv0321"/>
<dbReference type="DNASU" id="886552"/>
<dbReference type="GeneID" id="45424289"/>
<dbReference type="GeneID" id="886552"/>
<dbReference type="KEGG" id="mtu:Rv0321"/>
<dbReference type="KEGG" id="mtv:RVBD_0321"/>
<dbReference type="TubercuList" id="Rv0321"/>
<dbReference type="eggNOG" id="COG0717">
    <property type="taxonomic scope" value="Bacteria"/>
</dbReference>
<dbReference type="InParanoid" id="P9WP17"/>
<dbReference type="OrthoDB" id="9780956at2"/>
<dbReference type="PhylomeDB" id="P9WP17"/>
<dbReference type="BRENDA" id="3.5.4.13">
    <property type="organism ID" value="3445"/>
</dbReference>
<dbReference type="UniPathway" id="UPA00610">
    <property type="reaction ID" value="UER00667"/>
</dbReference>
<dbReference type="EvolutionaryTrace" id="P9WP17"/>
<dbReference type="Proteomes" id="UP000001584">
    <property type="component" value="Chromosome"/>
</dbReference>
<dbReference type="GO" id="GO:0033973">
    <property type="term" value="F:dCTP deaminase (dUMP-forming) activity"/>
    <property type="evidence" value="ECO:0000314"/>
    <property type="project" value="MTBBASE"/>
</dbReference>
<dbReference type="GO" id="GO:0008829">
    <property type="term" value="F:dCTP deaminase activity"/>
    <property type="evidence" value="ECO:0000318"/>
    <property type="project" value="GO_Central"/>
</dbReference>
<dbReference type="GO" id="GO:0004170">
    <property type="term" value="F:dUTP diphosphatase activity"/>
    <property type="evidence" value="ECO:0000314"/>
    <property type="project" value="MTBBASE"/>
</dbReference>
<dbReference type="GO" id="GO:0000166">
    <property type="term" value="F:nucleotide binding"/>
    <property type="evidence" value="ECO:0007669"/>
    <property type="project" value="UniProtKB-KW"/>
</dbReference>
<dbReference type="GO" id="GO:0006226">
    <property type="term" value="P:dUMP biosynthetic process"/>
    <property type="evidence" value="ECO:0007669"/>
    <property type="project" value="UniProtKB-UniRule"/>
</dbReference>
<dbReference type="GO" id="GO:0006229">
    <property type="term" value="P:dUTP biosynthetic process"/>
    <property type="evidence" value="ECO:0007669"/>
    <property type="project" value="InterPro"/>
</dbReference>
<dbReference type="GO" id="GO:0015949">
    <property type="term" value="P:nucleobase-containing small molecule interconversion"/>
    <property type="evidence" value="ECO:0000318"/>
    <property type="project" value="GO_Central"/>
</dbReference>
<dbReference type="CDD" id="cd07557">
    <property type="entry name" value="trimeric_dUTPase"/>
    <property type="match status" value="1"/>
</dbReference>
<dbReference type="FunFam" id="2.70.40.10:FF:000005">
    <property type="entry name" value="dCTP deaminase, dUMP-forming"/>
    <property type="match status" value="1"/>
</dbReference>
<dbReference type="Gene3D" id="2.70.40.10">
    <property type="match status" value="1"/>
</dbReference>
<dbReference type="HAMAP" id="MF_00146">
    <property type="entry name" value="dCTP_deaminase"/>
    <property type="match status" value="1"/>
</dbReference>
<dbReference type="InterPro" id="IPR011962">
    <property type="entry name" value="dCTP_deaminase"/>
</dbReference>
<dbReference type="InterPro" id="IPR036157">
    <property type="entry name" value="dUTPase-like_sf"/>
</dbReference>
<dbReference type="InterPro" id="IPR033704">
    <property type="entry name" value="dUTPase_trimeric"/>
</dbReference>
<dbReference type="NCBIfam" id="TIGR02274">
    <property type="entry name" value="dCTP_deam"/>
    <property type="match status" value="1"/>
</dbReference>
<dbReference type="PANTHER" id="PTHR42680">
    <property type="entry name" value="DCTP DEAMINASE"/>
    <property type="match status" value="1"/>
</dbReference>
<dbReference type="PANTHER" id="PTHR42680:SF3">
    <property type="entry name" value="DCTP DEAMINASE"/>
    <property type="match status" value="1"/>
</dbReference>
<dbReference type="Pfam" id="PF22769">
    <property type="entry name" value="DCD"/>
    <property type="match status" value="1"/>
</dbReference>
<dbReference type="SUPFAM" id="SSF51283">
    <property type="entry name" value="dUTPase-like"/>
    <property type="match status" value="1"/>
</dbReference>
<protein>
    <recommendedName>
        <fullName evidence="2 6">dCTP deaminase, dUMP-forming</fullName>
        <ecNumber evidence="2 4">3.5.4.30</ecNumber>
    </recommendedName>
    <alternativeName>
        <fullName evidence="2 5">Bifunctional dCTP deaminase:dUTPase</fullName>
    </alternativeName>
    <alternativeName>
        <fullName evidence="2">DCD-DUT</fullName>
    </alternativeName>
</protein>
<proteinExistence type="evidence at protein level"/>
<reference key="1">
    <citation type="journal article" date="1998" name="Nature">
        <title>Deciphering the biology of Mycobacterium tuberculosis from the complete genome sequence.</title>
        <authorList>
            <person name="Cole S.T."/>
            <person name="Brosch R."/>
            <person name="Parkhill J."/>
            <person name="Garnier T."/>
            <person name="Churcher C.M."/>
            <person name="Harris D.E."/>
            <person name="Gordon S.V."/>
            <person name="Eiglmeier K."/>
            <person name="Gas S."/>
            <person name="Barry C.E. III"/>
            <person name="Tekaia F."/>
            <person name="Badcock K."/>
            <person name="Basham D."/>
            <person name="Brown D."/>
            <person name="Chillingworth T."/>
            <person name="Connor R."/>
            <person name="Davies R.M."/>
            <person name="Devlin K."/>
            <person name="Feltwell T."/>
            <person name="Gentles S."/>
            <person name="Hamlin N."/>
            <person name="Holroyd S."/>
            <person name="Hornsby T."/>
            <person name="Jagels K."/>
            <person name="Krogh A."/>
            <person name="McLean J."/>
            <person name="Moule S."/>
            <person name="Murphy L.D."/>
            <person name="Oliver S."/>
            <person name="Osborne J."/>
            <person name="Quail M.A."/>
            <person name="Rajandream M.A."/>
            <person name="Rogers J."/>
            <person name="Rutter S."/>
            <person name="Seeger K."/>
            <person name="Skelton S."/>
            <person name="Squares S."/>
            <person name="Squares R."/>
            <person name="Sulston J.E."/>
            <person name="Taylor K."/>
            <person name="Whitehead S."/>
            <person name="Barrell B.G."/>
        </authorList>
    </citation>
    <scope>NUCLEOTIDE SEQUENCE [LARGE SCALE GENOMIC DNA]</scope>
    <source>
        <strain>ATCC 25618 / H37Rv</strain>
    </source>
</reference>
<reference key="2">
    <citation type="journal article" date="2011" name="Mol. Cell. Proteomics">
        <title>Proteogenomic analysis of Mycobacterium tuberculosis by high resolution mass spectrometry.</title>
        <authorList>
            <person name="Kelkar D.S."/>
            <person name="Kumar D."/>
            <person name="Kumar P."/>
            <person name="Balakrishnan L."/>
            <person name="Muthusamy B."/>
            <person name="Yadav A.K."/>
            <person name="Shrivastava P."/>
            <person name="Marimuthu A."/>
            <person name="Anand S."/>
            <person name="Sundaram H."/>
            <person name="Kingsbury R."/>
            <person name="Harsha H.C."/>
            <person name="Nair B."/>
            <person name="Prasad T.S."/>
            <person name="Chauhan D.S."/>
            <person name="Katoch K."/>
            <person name="Katoch V.M."/>
            <person name="Kumar P."/>
            <person name="Chaerkady R."/>
            <person name="Ramachandran S."/>
            <person name="Dash D."/>
            <person name="Pandey A."/>
        </authorList>
    </citation>
    <scope>IDENTIFICATION BY MASS SPECTROMETRY [LARGE SCALE ANALYSIS]</scope>
    <source>
        <strain>ATCC 25618 / H37Rv</strain>
    </source>
</reference>
<reference evidence="9 10" key="3">
    <citation type="journal article" date="2008" name="J. Mol. Biol.">
        <title>Mechanism of dTTP inhibition of the bifunctional dCTP deaminase:dUTPase encoded by Mycobacterium tuberculosis.</title>
        <authorList>
            <person name="Helt S.S."/>
            <person name="Thymark M."/>
            <person name="Harris P."/>
            <person name="Aagaard C."/>
            <person name="Dietrich J."/>
            <person name="Larsen S."/>
            <person name="Willemoes M."/>
        </authorList>
    </citation>
    <scope>X-RAY CRYSTALLOGRAPHY (2.00 ANGSTROMS) OF APOENZYME AND IN COMPLEX WITH DTTP</scope>
    <scope>FUNCTION</scope>
    <scope>CATALYTIC ACTIVITY</scope>
    <scope>ACTIVITY REGULATION</scope>
    <scope>BIOPHYSICOCHEMICAL PROPERTIES</scope>
    <scope>SUBUNIT</scope>
</reference>
<reference evidence="11" key="4">
    <citation type="submission" date="2011-11" db="PDB data bank">
        <title>Dttp inhibition of the bifunctional Dctp deaminase- dutpase from Mycobacterium tuberculosis is pH dependent: kinetic analyses and crystal structure of A115V Variant.</title>
        <authorList>
            <person name="Lovgreen M.N."/>
            <person name="Harris P."/>
            <person name="Ucar E."/>
            <person name="Willemoes M."/>
        </authorList>
    </citation>
    <scope>X-RAY CRYSTALLOGRAPHY (2.90 ANGSTROMS) OF MUTANT VAL-115 IN COMPLEX WITH DTTP</scope>
</reference>
<sequence length="190" mass="20870">MLLSDRDLRAEISSGRLGIDPFDDTLVQPSSIDVRLDCLFRVFNNTRYTHIDPAKQQDELTSLVQPVDGEPFVLHPGEFVLGSTLELFTLPDNLAGRLEGKSSLGRLGLLTHSTAGFIDPGFSGHITLELSNVANLPITLWPGMKIGQLCMLRLTSPSEHPYGSSRAGSKYQGQRGPTPSRSYQNFIRST</sequence>
<accession>P9WP17</accession>
<accession>L0T3B0</accession>
<accession>O07247</accession>
<keyword id="KW-0002">3D-structure</keyword>
<keyword id="KW-0378">Hydrolase</keyword>
<keyword id="KW-0546">Nucleotide metabolism</keyword>
<keyword id="KW-0547">Nucleotide-binding</keyword>
<keyword id="KW-1185">Reference proteome</keyword>
<feature type="chain" id="PRO_0000155997" description="dCTP deaminase, dUMP-forming">
    <location>
        <begin position="1"/>
        <end position="190"/>
    </location>
</feature>
<feature type="region of interest" description="Disordered" evidence="3">
    <location>
        <begin position="160"/>
        <end position="190"/>
    </location>
</feature>
<feature type="compositionally biased region" description="Polar residues" evidence="3">
    <location>
        <begin position="171"/>
        <end position="190"/>
    </location>
</feature>
<feature type="active site" description="Proton donor/acceptor" evidence="1 2">
    <location>
        <position position="129"/>
    </location>
</feature>
<feature type="binding site" evidence="2 8">
    <location>
        <begin position="101"/>
        <end position="106"/>
    </location>
    <ligand>
        <name>dCTP</name>
        <dbReference type="ChEBI" id="CHEBI:61481"/>
    </ligand>
</feature>
<feature type="binding site" evidence="2 7 8">
    <location>
        <position position="119"/>
    </location>
    <ligand>
        <name>dCTP</name>
        <dbReference type="ChEBI" id="CHEBI:61481"/>
    </ligand>
</feature>
<feature type="binding site" evidence="2 7 8">
    <location>
        <begin position="127"/>
        <end position="129"/>
    </location>
    <ligand>
        <name>dCTP</name>
        <dbReference type="ChEBI" id="CHEBI:61481"/>
    </ligand>
</feature>
<feature type="binding site" evidence="2 8">
    <location>
        <position position="148"/>
    </location>
    <ligand>
        <name>dCTP</name>
        <dbReference type="ChEBI" id="CHEBI:61481"/>
    </ligand>
</feature>
<feature type="binding site" evidence="2 7 8">
    <location>
        <position position="162"/>
    </location>
    <ligand>
        <name>dCTP</name>
        <dbReference type="ChEBI" id="CHEBI:61481"/>
    </ligand>
</feature>
<feature type="binding site" evidence="2 7 8">
    <location>
        <position position="170"/>
    </location>
    <ligand>
        <name>dCTP</name>
        <dbReference type="ChEBI" id="CHEBI:61481"/>
    </ligand>
</feature>
<feature type="binding site" evidence="2 7 8">
    <location>
        <position position="174"/>
    </location>
    <ligand>
        <name>dCTP</name>
        <dbReference type="ChEBI" id="CHEBI:61481"/>
    </ligand>
</feature>
<feature type="site" description="Important for bifunctional activity" evidence="2 7">
    <location>
        <begin position="116"/>
        <end position="117"/>
    </location>
</feature>
<feature type="helix" evidence="12">
    <location>
        <begin position="5"/>
        <end position="13"/>
    </location>
</feature>
<feature type="strand" evidence="12">
    <location>
        <begin position="16"/>
        <end position="21"/>
    </location>
</feature>
<feature type="helix" evidence="12">
    <location>
        <begin position="24"/>
        <end position="26"/>
    </location>
</feature>
<feature type="strand" evidence="12">
    <location>
        <begin position="31"/>
        <end position="36"/>
    </location>
</feature>
<feature type="strand" evidence="12">
    <location>
        <begin position="40"/>
        <end position="42"/>
    </location>
</feature>
<feature type="strand" evidence="13">
    <location>
        <begin position="49"/>
        <end position="51"/>
    </location>
</feature>
<feature type="helix" evidence="12">
    <location>
        <begin position="58"/>
        <end position="60"/>
    </location>
</feature>
<feature type="strand" evidence="12">
    <location>
        <begin position="61"/>
        <end position="64"/>
    </location>
</feature>
<feature type="strand" evidence="12">
    <location>
        <begin position="72"/>
        <end position="74"/>
    </location>
</feature>
<feature type="strand" evidence="12">
    <location>
        <begin position="79"/>
        <end position="89"/>
    </location>
</feature>
<feature type="strand" evidence="12">
    <location>
        <begin position="94"/>
        <end position="99"/>
    </location>
</feature>
<feature type="helix" evidence="12">
    <location>
        <begin position="102"/>
        <end position="105"/>
    </location>
</feature>
<feature type="turn" evidence="12">
    <location>
        <begin position="106"/>
        <end position="108"/>
    </location>
</feature>
<feature type="strand" evidence="12">
    <location>
        <begin position="109"/>
        <end position="111"/>
    </location>
</feature>
<feature type="strand" evidence="12">
    <location>
        <begin position="127"/>
        <end position="132"/>
    </location>
</feature>
<feature type="strand" evidence="12">
    <location>
        <begin position="134"/>
        <end position="136"/>
    </location>
</feature>
<feature type="strand" evidence="12">
    <location>
        <begin position="138"/>
        <end position="140"/>
    </location>
</feature>
<feature type="strand" evidence="12">
    <location>
        <begin position="144"/>
        <end position="153"/>
    </location>
</feature>
<feature type="turn" evidence="12">
    <location>
        <begin position="165"/>
        <end position="168"/>
    </location>
</feature>
<feature type="turn" evidence="12">
    <location>
        <begin position="182"/>
        <end position="185"/>
    </location>
</feature>